<feature type="chain" id="PRO_0000224431" description="Valine--tRNA ligase">
    <location>
        <begin position="1"/>
        <end position="881"/>
    </location>
</feature>
<feature type="coiled-coil region" evidence="1">
    <location>
        <begin position="810"/>
        <end position="881"/>
    </location>
</feature>
<feature type="short sequence motif" description="'HIGH' region">
    <location>
        <begin position="49"/>
        <end position="59"/>
    </location>
</feature>
<feature type="short sequence motif" description="'KMSKS' region">
    <location>
        <begin position="526"/>
        <end position="530"/>
    </location>
</feature>
<feature type="binding site" evidence="1">
    <location>
        <position position="529"/>
    </location>
    <ligand>
        <name>ATP</name>
        <dbReference type="ChEBI" id="CHEBI:30616"/>
    </ligand>
</feature>
<organism>
    <name type="scientific">Bacillus cereus (strain ATCC 10987 / NRS 248)</name>
    <dbReference type="NCBI Taxonomy" id="222523"/>
    <lineage>
        <taxon>Bacteria</taxon>
        <taxon>Bacillati</taxon>
        <taxon>Bacillota</taxon>
        <taxon>Bacilli</taxon>
        <taxon>Bacillales</taxon>
        <taxon>Bacillaceae</taxon>
        <taxon>Bacillus</taxon>
        <taxon>Bacillus cereus group</taxon>
    </lineage>
</organism>
<dbReference type="EC" id="6.1.1.9" evidence="1"/>
<dbReference type="EMBL" id="AE017194">
    <property type="protein sequence ID" value="AAS43450.1"/>
    <property type="molecule type" value="Genomic_DNA"/>
</dbReference>
<dbReference type="SMR" id="Q72ZW8"/>
<dbReference type="KEGG" id="bca:BCE_4549"/>
<dbReference type="HOGENOM" id="CLU_001493_0_2_9"/>
<dbReference type="Proteomes" id="UP000002527">
    <property type="component" value="Chromosome"/>
</dbReference>
<dbReference type="GO" id="GO:0005829">
    <property type="term" value="C:cytosol"/>
    <property type="evidence" value="ECO:0007669"/>
    <property type="project" value="TreeGrafter"/>
</dbReference>
<dbReference type="GO" id="GO:0002161">
    <property type="term" value="F:aminoacyl-tRNA deacylase activity"/>
    <property type="evidence" value="ECO:0007669"/>
    <property type="project" value="InterPro"/>
</dbReference>
<dbReference type="GO" id="GO:0005524">
    <property type="term" value="F:ATP binding"/>
    <property type="evidence" value="ECO:0007669"/>
    <property type="project" value="UniProtKB-UniRule"/>
</dbReference>
<dbReference type="GO" id="GO:0004832">
    <property type="term" value="F:valine-tRNA ligase activity"/>
    <property type="evidence" value="ECO:0007669"/>
    <property type="project" value="UniProtKB-UniRule"/>
</dbReference>
<dbReference type="GO" id="GO:0006438">
    <property type="term" value="P:valyl-tRNA aminoacylation"/>
    <property type="evidence" value="ECO:0007669"/>
    <property type="project" value="UniProtKB-UniRule"/>
</dbReference>
<dbReference type="CDD" id="cd07962">
    <property type="entry name" value="Anticodon_Ia_Val"/>
    <property type="match status" value="1"/>
</dbReference>
<dbReference type="CDD" id="cd00817">
    <property type="entry name" value="ValRS_core"/>
    <property type="match status" value="1"/>
</dbReference>
<dbReference type="FunFam" id="1.10.287.380:FF:000001">
    <property type="entry name" value="Valine--tRNA ligase"/>
    <property type="match status" value="1"/>
</dbReference>
<dbReference type="FunFam" id="1.10.730.10:FF:000014">
    <property type="entry name" value="Valine--tRNA ligase"/>
    <property type="match status" value="1"/>
</dbReference>
<dbReference type="FunFam" id="3.40.50.620:FF:000032">
    <property type="entry name" value="Valine--tRNA ligase"/>
    <property type="match status" value="1"/>
</dbReference>
<dbReference type="FunFam" id="3.40.50.620:FF:000098">
    <property type="entry name" value="Valine--tRNA ligase"/>
    <property type="match status" value="1"/>
</dbReference>
<dbReference type="FunFam" id="3.90.740.10:FF:000005">
    <property type="entry name" value="Valine--tRNA ligase, mitochondrial"/>
    <property type="match status" value="1"/>
</dbReference>
<dbReference type="Gene3D" id="3.40.50.620">
    <property type="entry name" value="HUPs"/>
    <property type="match status" value="2"/>
</dbReference>
<dbReference type="Gene3D" id="1.10.730.10">
    <property type="entry name" value="Isoleucyl-tRNA Synthetase, Domain 1"/>
    <property type="match status" value="1"/>
</dbReference>
<dbReference type="Gene3D" id="1.10.287.380">
    <property type="entry name" value="Valyl-tRNA synthetase, C-terminal domain"/>
    <property type="match status" value="1"/>
</dbReference>
<dbReference type="Gene3D" id="3.90.740.10">
    <property type="entry name" value="Valyl/Leucyl/Isoleucyl-tRNA synthetase, editing domain"/>
    <property type="match status" value="1"/>
</dbReference>
<dbReference type="HAMAP" id="MF_02004">
    <property type="entry name" value="Val_tRNA_synth_type1"/>
    <property type="match status" value="1"/>
</dbReference>
<dbReference type="InterPro" id="IPR001412">
    <property type="entry name" value="aa-tRNA-synth_I_CS"/>
</dbReference>
<dbReference type="InterPro" id="IPR002300">
    <property type="entry name" value="aa-tRNA-synth_Ia"/>
</dbReference>
<dbReference type="InterPro" id="IPR033705">
    <property type="entry name" value="Anticodon_Ia_Val"/>
</dbReference>
<dbReference type="InterPro" id="IPR013155">
    <property type="entry name" value="M/V/L/I-tRNA-synth_anticd-bd"/>
</dbReference>
<dbReference type="InterPro" id="IPR014729">
    <property type="entry name" value="Rossmann-like_a/b/a_fold"/>
</dbReference>
<dbReference type="InterPro" id="IPR010978">
    <property type="entry name" value="tRNA-bd_arm"/>
</dbReference>
<dbReference type="InterPro" id="IPR009080">
    <property type="entry name" value="tRNAsynth_Ia_anticodon-bd"/>
</dbReference>
<dbReference type="InterPro" id="IPR037118">
    <property type="entry name" value="Val-tRNA_synth_C_sf"/>
</dbReference>
<dbReference type="InterPro" id="IPR019499">
    <property type="entry name" value="Val-tRNA_synth_tRNA-bd"/>
</dbReference>
<dbReference type="InterPro" id="IPR009008">
    <property type="entry name" value="Val/Leu/Ile-tRNA-synth_edit"/>
</dbReference>
<dbReference type="InterPro" id="IPR002303">
    <property type="entry name" value="Valyl-tRNA_ligase"/>
</dbReference>
<dbReference type="NCBIfam" id="NF004349">
    <property type="entry name" value="PRK05729.1"/>
    <property type="match status" value="1"/>
</dbReference>
<dbReference type="NCBIfam" id="TIGR00422">
    <property type="entry name" value="valS"/>
    <property type="match status" value="1"/>
</dbReference>
<dbReference type="PANTHER" id="PTHR11946:SF93">
    <property type="entry name" value="VALINE--TRNA LIGASE, CHLOROPLASTIC_MITOCHONDRIAL 2"/>
    <property type="match status" value="1"/>
</dbReference>
<dbReference type="PANTHER" id="PTHR11946">
    <property type="entry name" value="VALYL-TRNA SYNTHETASES"/>
    <property type="match status" value="1"/>
</dbReference>
<dbReference type="Pfam" id="PF08264">
    <property type="entry name" value="Anticodon_1"/>
    <property type="match status" value="1"/>
</dbReference>
<dbReference type="Pfam" id="PF00133">
    <property type="entry name" value="tRNA-synt_1"/>
    <property type="match status" value="2"/>
</dbReference>
<dbReference type="Pfam" id="PF10458">
    <property type="entry name" value="Val_tRNA-synt_C"/>
    <property type="match status" value="1"/>
</dbReference>
<dbReference type="PRINTS" id="PR00986">
    <property type="entry name" value="TRNASYNTHVAL"/>
</dbReference>
<dbReference type="SUPFAM" id="SSF47323">
    <property type="entry name" value="Anticodon-binding domain of a subclass of class I aminoacyl-tRNA synthetases"/>
    <property type="match status" value="1"/>
</dbReference>
<dbReference type="SUPFAM" id="SSF52374">
    <property type="entry name" value="Nucleotidylyl transferase"/>
    <property type="match status" value="1"/>
</dbReference>
<dbReference type="SUPFAM" id="SSF46589">
    <property type="entry name" value="tRNA-binding arm"/>
    <property type="match status" value="1"/>
</dbReference>
<dbReference type="SUPFAM" id="SSF50677">
    <property type="entry name" value="ValRS/IleRS/LeuRS editing domain"/>
    <property type="match status" value="1"/>
</dbReference>
<dbReference type="PROSITE" id="PS00178">
    <property type="entry name" value="AA_TRNA_LIGASE_I"/>
    <property type="match status" value="1"/>
</dbReference>
<keyword id="KW-0030">Aminoacyl-tRNA synthetase</keyword>
<keyword id="KW-0067">ATP-binding</keyword>
<keyword id="KW-0175">Coiled coil</keyword>
<keyword id="KW-0963">Cytoplasm</keyword>
<keyword id="KW-0436">Ligase</keyword>
<keyword id="KW-0547">Nucleotide-binding</keyword>
<keyword id="KW-0648">Protein biosynthesis</keyword>
<evidence type="ECO:0000255" key="1">
    <source>
        <dbReference type="HAMAP-Rule" id="MF_02004"/>
    </source>
</evidence>
<comment type="function">
    <text evidence="1">Catalyzes the attachment of valine to tRNA(Val). As ValRS can inadvertently accommodate and process structurally similar amino acids such as threonine, to avoid such errors, it has a 'posttransfer' editing activity that hydrolyzes mischarged Thr-tRNA(Val) in a tRNA-dependent manner.</text>
</comment>
<comment type="catalytic activity">
    <reaction evidence="1">
        <text>tRNA(Val) + L-valine + ATP = L-valyl-tRNA(Val) + AMP + diphosphate</text>
        <dbReference type="Rhea" id="RHEA:10704"/>
        <dbReference type="Rhea" id="RHEA-COMP:9672"/>
        <dbReference type="Rhea" id="RHEA-COMP:9708"/>
        <dbReference type="ChEBI" id="CHEBI:30616"/>
        <dbReference type="ChEBI" id="CHEBI:33019"/>
        <dbReference type="ChEBI" id="CHEBI:57762"/>
        <dbReference type="ChEBI" id="CHEBI:78442"/>
        <dbReference type="ChEBI" id="CHEBI:78537"/>
        <dbReference type="ChEBI" id="CHEBI:456215"/>
        <dbReference type="EC" id="6.1.1.9"/>
    </reaction>
</comment>
<comment type="subunit">
    <text evidence="1">Monomer.</text>
</comment>
<comment type="subcellular location">
    <subcellularLocation>
        <location evidence="1">Cytoplasm</location>
    </subcellularLocation>
</comment>
<comment type="domain">
    <text evidence="1">ValRS has two distinct active sites: one for aminoacylation and one for editing. The misactivated threonine is translocated from the active site to the editing site.</text>
</comment>
<comment type="domain">
    <text evidence="1">The C-terminal coiled-coil domain is crucial for aminoacylation activity.</text>
</comment>
<comment type="similarity">
    <text evidence="1">Belongs to the class-I aminoacyl-tRNA synthetase family. ValS type 1 subfamily.</text>
</comment>
<name>SYV_BACC1</name>
<proteinExistence type="inferred from homology"/>
<gene>
    <name evidence="1" type="primary">valS</name>
    <name type="ordered locus">BCE_4549</name>
</gene>
<reference key="1">
    <citation type="journal article" date="2004" name="Nucleic Acids Res.">
        <title>The genome sequence of Bacillus cereus ATCC 10987 reveals metabolic adaptations and a large plasmid related to Bacillus anthracis pXO1.</title>
        <authorList>
            <person name="Rasko D.A."/>
            <person name="Ravel J."/>
            <person name="Oekstad O.A."/>
            <person name="Helgason E."/>
            <person name="Cer R.Z."/>
            <person name="Jiang L."/>
            <person name="Shores K.A."/>
            <person name="Fouts D.E."/>
            <person name="Tourasse N.J."/>
            <person name="Angiuoli S.V."/>
            <person name="Kolonay J.F."/>
            <person name="Nelson W.C."/>
            <person name="Kolstoe A.-B."/>
            <person name="Fraser C.M."/>
            <person name="Read T.D."/>
        </authorList>
    </citation>
    <scope>NUCLEOTIDE SEQUENCE [LARGE SCALE GENOMIC DNA]</scope>
    <source>
        <strain>ATCC 10987 / NRS 248</strain>
    </source>
</reference>
<accession>Q72ZW8</accession>
<protein>
    <recommendedName>
        <fullName evidence="1">Valine--tRNA ligase</fullName>
        <ecNumber evidence="1">6.1.1.9</ecNumber>
    </recommendedName>
    <alternativeName>
        <fullName evidence="1">Valyl-tRNA synthetase</fullName>
        <shortName evidence="1">ValRS</shortName>
    </alternativeName>
</protein>
<sequence>MSNTEKNLPTKYDHMSVEEGLYQWWLEGKYFEATGDEKKQPYTIVIPPPNVTGKLHLGHAWDTTLQDILTRTKRMQGYDVLWLPGMDHAGIATQAKVEGKLREEGISRYDLGREKFLEKAWEWKEEYASHIRQQWGKVGLGLDYSRERFTLDEGLSDAVNKVFVQLYEKGLIYRGEYIINWDPATRTALSDIEVIHKEVQGAFYHMNYPLTDGSGHIRLATTRPETMLGDTAVAVHPEDDRYKHLIGKTVTLPIVGREIPIIADEYVEKDFGTGVVKITPAHDPNDFEVGNRHDLPRILVMNEDGTMNEKAGKYNGMDRFECRKALVKDLQEAGVLVEIEPHMHSVGHSERSGAVVEPYLSTQWFVKMAPLAEKAVALQQKEEEKVTFVPERFENTYLRWMENIHDWCISRQLWWGHRIPAWYHKETGEVYVGTEAPADIENWNQDNDVLDTWFSSALWPFSTLGWPNEDAADFKRYYSTDALVTGYDIIFFWVSRMIFQGLEFTGERPFKDVLIHGLVRDEQGRKMSKSLGNGIDPMEVIEKYGADAMRFFLSTGSAPGQDLRFSMEKVESTWNFINKIWNASRFVLMNMDDMKYEEIDLTGEKSVADKWILTRLNETIESVTRNMDKYEFGEAGRSLYNFIWDDFCDWYIEMAKLPLYGEDEAAKKTTRSILAYVLDQTMRLLHPFMPFVTEKIWQHLPHEGESITVAAWPTVREDLQDAEAAAEMHLLVDIIRSVRNIRAEVNTPMSKKVQMQIKAKDEAVLAQLTKNSSYIERFCNPSELTIQTDLQAPEKAMTAIVTGAELFLPLADLINLDEERARLEKELEKFDKEVERVQKKLSNQGFVAKAPAAVIEGERAKEQDYLEKREAVRQRLADLEK</sequence>